<comment type="function">
    <text evidence="1 4">Acts as a signaling pathway regulator involved in innate immune system response (PubMed:29350881). In response to interferon IFN-alpha, associates in a complex with transcriptional regulator NMI to regulate immune response; the complex formation prevents proteasome-mediated degradation of IFI35 and correlates with IFI35 dephosphorylation (By similarity). In complex with NMI, inhibits virus-triggered type I interferon/IFN-beta production (By similarity). In complex with NMI, negatively regulates nuclear factor NF-kappa-B signaling by inhibiting the nuclear translocation, activation and transcription of the NF-kappa-B subunit p65/RELA, resulting in the inhibition of endothelial cell proliferation, migration and re-endothelialization of injured arteries (PubMed:29350881). Beside its role as an intracellular signaling pathway regulator, also functions extracellularly as damage-associated molecular patterns (DAMPs) to promote inflammation when actively released by macrophage to the extracellular space during cell injury and pathogen invasion (By similarity). Macrophage-secreted IFI35 activates NF-kappa-B signaling in adjacent macrophages through Toll-like receptor 4/TLR4 activation, thereby inducing NF-kappa-B translocation from the cytoplasm into the nucleus which promotes the release of pro-inflammatory cytokines (By similarity).</text>
</comment>
<comment type="subunit">
    <text evidence="1">Homodimer. Also interacts with B-ATF. Interacts with TRIM21. Interacts (via NID domains) with NMI (via NID domains); the interaction is direct and is facilitated by TRIM21.</text>
</comment>
<comment type="subcellular location">
    <subcellularLocation>
        <location evidence="1">Cytoplasm</location>
    </subcellularLocation>
    <subcellularLocation>
        <location evidence="1">Nucleus</location>
    </subcellularLocation>
    <subcellularLocation>
        <location evidence="1">Secreted</location>
    </subcellularLocation>
    <text evidence="1">Cytoplasmic IFI35 localizes in punctate granular structures (By similarity). Nuclear localization increased following IFN-alpha treatment (By similarity). Extracelullar following secretion by macrophage (By similarity).</text>
</comment>
<comment type="domain">
    <text evidence="1">The NID domain 1 is involved in the negative regulation of p65/RELA transcription and the negative regulation of NF-kappa-B pathway activation.</text>
</comment>
<comment type="PTM">
    <text evidence="1">Phosphorylated. Dephosphorylation correlates with the formation of a complex with NMI.</text>
</comment>
<comment type="disruption phenotype">
    <text evidence="3">Knockout mice show decreased inflammatory response when exposed to infection or injury, which can lead to lower inflammation-induced mortality.</text>
</comment>
<comment type="similarity">
    <text evidence="7">Belongs to the NMI family.</text>
</comment>
<proteinExistence type="evidence at protein level"/>
<keyword id="KW-0963">Cytoplasm</keyword>
<keyword id="KW-0391">Immunity</keyword>
<keyword id="KW-0399">Innate immunity</keyword>
<keyword id="KW-0539">Nucleus</keyword>
<keyword id="KW-0597">Phosphoprotein</keyword>
<keyword id="KW-1185">Reference proteome</keyword>
<keyword id="KW-0964">Secreted</keyword>
<protein>
    <recommendedName>
        <fullName evidence="5">Interferon-induced 35 kDa protein homolog</fullName>
        <shortName evidence="5">IFP 35</shortName>
        <shortName evidence="6">Ifi-35</shortName>
    </recommendedName>
</protein>
<feature type="chain" id="PRO_0000159705" description="Interferon-induced 35 kDa protein homolog">
    <location>
        <begin position="1"/>
        <end position="286"/>
    </location>
</feature>
<feature type="domain" description="NID 1" evidence="2">
    <location>
        <begin position="81"/>
        <end position="170"/>
    </location>
</feature>
<feature type="domain" description="NID 2" evidence="2">
    <location>
        <begin position="183"/>
        <end position="266"/>
    </location>
</feature>
<feature type="region of interest" description="Leucine-zipper">
    <location>
        <begin position="5"/>
        <end position="26"/>
    </location>
</feature>
<feature type="sequence conflict" description="In Ref. 2; AAH08158." evidence="7" ref="2">
    <original>R</original>
    <variation>W</variation>
    <location>
        <position position="108"/>
    </location>
</feature>
<organism>
    <name type="scientific">Mus musculus</name>
    <name type="common">Mouse</name>
    <dbReference type="NCBI Taxonomy" id="10090"/>
    <lineage>
        <taxon>Eukaryota</taxon>
        <taxon>Metazoa</taxon>
        <taxon>Chordata</taxon>
        <taxon>Craniata</taxon>
        <taxon>Vertebrata</taxon>
        <taxon>Euteleostomi</taxon>
        <taxon>Mammalia</taxon>
        <taxon>Eutheria</taxon>
        <taxon>Euarchontoglires</taxon>
        <taxon>Glires</taxon>
        <taxon>Rodentia</taxon>
        <taxon>Myomorpha</taxon>
        <taxon>Muroidea</taxon>
        <taxon>Muridae</taxon>
        <taxon>Murinae</taxon>
        <taxon>Mus</taxon>
        <taxon>Mus</taxon>
    </lineage>
</organism>
<dbReference type="EMBL" id="AK008161">
    <property type="protein sequence ID" value="BAB25503.1"/>
    <property type="molecule type" value="mRNA"/>
</dbReference>
<dbReference type="EMBL" id="AK131884">
    <property type="protein sequence ID" value="BAE20851.1"/>
    <property type="molecule type" value="mRNA"/>
</dbReference>
<dbReference type="EMBL" id="BC008158">
    <property type="protein sequence ID" value="AAH08158.1"/>
    <property type="molecule type" value="mRNA"/>
</dbReference>
<dbReference type="CCDS" id="CCDS25471.1"/>
<dbReference type="RefSeq" id="NP_081596.1">
    <property type="nucleotide sequence ID" value="NM_027320.4"/>
</dbReference>
<dbReference type="BioGRID" id="213868">
    <property type="interactions" value="1"/>
</dbReference>
<dbReference type="FunCoup" id="Q9D8C4">
    <property type="interactions" value="1201"/>
</dbReference>
<dbReference type="IntAct" id="Q9D8C4">
    <property type="interactions" value="2"/>
</dbReference>
<dbReference type="STRING" id="10090.ENSMUSP00000010502"/>
<dbReference type="iPTMnet" id="Q9D8C4"/>
<dbReference type="PhosphoSitePlus" id="Q9D8C4"/>
<dbReference type="jPOST" id="Q9D8C4"/>
<dbReference type="PaxDb" id="10090-ENSMUSP00000010502"/>
<dbReference type="PeptideAtlas" id="Q9D8C4"/>
<dbReference type="ProteomicsDB" id="267131"/>
<dbReference type="Pumba" id="Q9D8C4"/>
<dbReference type="Antibodypedia" id="29492">
    <property type="antibodies" value="348 antibodies from 25 providers"/>
</dbReference>
<dbReference type="DNASU" id="70110"/>
<dbReference type="Ensembl" id="ENSMUST00000010502.13">
    <property type="protein sequence ID" value="ENSMUSP00000010502.7"/>
    <property type="gene ID" value="ENSMUSG00000010358.14"/>
</dbReference>
<dbReference type="GeneID" id="70110"/>
<dbReference type="KEGG" id="mmu:70110"/>
<dbReference type="UCSC" id="uc007lox.1">
    <property type="organism name" value="mouse"/>
</dbReference>
<dbReference type="AGR" id="MGI:1917360"/>
<dbReference type="CTD" id="3430"/>
<dbReference type="MGI" id="MGI:1917360">
    <property type="gene designation" value="Ifi35"/>
</dbReference>
<dbReference type="VEuPathDB" id="HostDB:ENSMUSG00000010358"/>
<dbReference type="eggNOG" id="ENOG502QUNN">
    <property type="taxonomic scope" value="Eukaryota"/>
</dbReference>
<dbReference type="GeneTree" id="ENSGT00530000063686"/>
<dbReference type="HOGENOM" id="CLU_047262_1_1_1"/>
<dbReference type="InParanoid" id="Q9D8C4"/>
<dbReference type="OMA" id="HKIDMEE"/>
<dbReference type="OrthoDB" id="9936051at2759"/>
<dbReference type="PhylomeDB" id="Q9D8C4"/>
<dbReference type="TreeFam" id="TF332752"/>
<dbReference type="BioGRID-ORCS" id="70110">
    <property type="hits" value="7 hits in 79 CRISPR screens"/>
</dbReference>
<dbReference type="PRO" id="PR:Q9D8C4"/>
<dbReference type="Proteomes" id="UP000000589">
    <property type="component" value="Chromosome 11"/>
</dbReference>
<dbReference type="RNAct" id="Q9D8C4">
    <property type="molecule type" value="protein"/>
</dbReference>
<dbReference type="Bgee" id="ENSMUSG00000010358">
    <property type="expression patterns" value="Expressed in small intestine Peyer's patch and 220 other cell types or tissues"/>
</dbReference>
<dbReference type="ExpressionAtlas" id="Q9D8C4">
    <property type="expression patterns" value="baseline and differential"/>
</dbReference>
<dbReference type="GO" id="GO:0005737">
    <property type="term" value="C:cytoplasm"/>
    <property type="evidence" value="ECO:0000250"/>
    <property type="project" value="UniProtKB"/>
</dbReference>
<dbReference type="GO" id="GO:0005829">
    <property type="term" value="C:cytosol"/>
    <property type="evidence" value="ECO:0000250"/>
    <property type="project" value="UniProtKB"/>
</dbReference>
<dbReference type="GO" id="GO:0005615">
    <property type="term" value="C:extracellular space"/>
    <property type="evidence" value="ECO:0000314"/>
    <property type="project" value="UniProtKB"/>
</dbReference>
<dbReference type="GO" id="GO:0016020">
    <property type="term" value="C:membrane"/>
    <property type="evidence" value="ECO:0000250"/>
    <property type="project" value="UniProtKB"/>
</dbReference>
<dbReference type="GO" id="GO:0005730">
    <property type="term" value="C:nucleolus"/>
    <property type="evidence" value="ECO:0007669"/>
    <property type="project" value="Ensembl"/>
</dbReference>
<dbReference type="GO" id="GO:0005654">
    <property type="term" value="C:nucleoplasm"/>
    <property type="evidence" value="ECO:0007669"/>
    <property type="project" value="Ensembl"/>
</dbReference>
<dbReference type="GO" id="GO:0005634">
    <property type="term" value="C:nucleus"/>
    <property type="evidence" value="ECO:0000250"/>
    <property type="project" value="UniProtKB"/>
</dbReference>
<dbReference type="GO" id="GO:0042802">
    <property type="term" value="F:identical protein binding"/>
    <property type="evidence" value="ECO:0000250"/>
    <property type="project" value="UniProtKB"/>
</dbReference>
<dbReference type="GO" id="GO:0045087">
    <property type="term" value="P:innate immune response"/>
    <property type="evidence" value="ECO:0007669"/>
    <property type="project" value="UniProtKB-KW"/>
</dbReference>
<dbReference type="GO" id="GO:0002281">
    <property type="term" value="P:macrophage activation involved in immune response"/>
    <property type="evidence" value="ECO:0000250"/>
    <property type="project" value="UniProtKB"/>
</dbReference>
<dbReference type="GO" id="GO:0008285">
    <property type="term" value="P:negative regulation of cell population proliferation"/>
    <property type="evidence" value="ECO:0000250"/>
    <property type="project" value="UniProtKB"/>
</dbReference>
<dbReference type="GO" id="GO:1901223">
    <property type="term" value="P:negative regulation of non-canonical NF-kappaB signal transduction"/>
    <property type="evidence" value="ECO:0000250"/>
    <property type="project" value="UniProtKB"/>
</dbReference>
<dbReference type="GO" id="GO:0050729">
    <property type="term" value="P:positive regulation of inflammatory response"/>
    <property type="evidence" value="ECO:0000315"/>
    <property type="project" value="UniProtKB"/>
</dbReference>
<dbReference type="GO" id="GO:0045089">
    <property type="term" value="P:positive regulation of innate immune response"/>
    <property type="evidence" value="ECO:0000315"/>
    <property type="project" value="UniProtKB"/>
</dbReference>
<dbReference type="GO" id="GO:1901224">
    <property type="term" value="P:positive regulation of non-canonical NF-kappaB signal transduction"/>
    <property type="evidence" value="ECO:0000315"/>
    <property type="project" value="UniProtKB"/>
</dbReference>
<dbReference type="GO" id="GO:0034145">
    <property type="term" value="P:positive regulation of toll-like receptor 4 signaling pathway"/>
    <property type="evidence" value="ECO:0000250"/>
    <property type="project" value="UniProtKB"/>
</dbReference>
<dbReference type="FunFam" id="3.30.70.330:FF:001253">
    <property type="entry name" value="Interferon-induced 35 kDa protein homolog"/>
    <property type="match status" value="1"/>
</dbReference>
<dbReference type="FunFam" id="3.30.70.330:FF:000300">
    <property type="entry name" value="Interferon-induced protein 35"/>
    <property type="match status" value="1"/>
</dbReference>
<dbReference type="Gene3D" id="3.30.70.330">
    <property type="match status" value="2"/>
</dbReference>
<dbReference type="InterPro" id="IPR009909">
    <property type="entry name" value="Nmi/IFP35_dom"/>
</dbReference>
<dbReference type="InterPro" id="IPR009938">
    <property type="entry name" value="Nmi/IFP35_N"/>
</dbReference>
<dbReference type="InterPro" id="IPR012677">
    <property type="entry name" value="Nucleotide-bd_a/b_plait_sf"/>
</dbReference>
<dbReference type="PANTHER" id="PTHR15225:SF1">
    <property type="entry name" value="INTERFERON-INDUCED 35 KDA PROTEIN"/>
    <property type="match status" value="1"/>
</dbReference>
<dbReference type="PANTHER" id="PTHR15225">
    <property type="entry name" value="INTERFERON-INDUCED PROTEIN 35/NMI N-MYC/STAT INTERACTING PROTEIN"/>
    <property type="match status" value="1"/>
</dbReference>
<dbReference type="Pfam" id="PF07334">
    <property type="entry name" value="IFP_35_N"/>
    <property type="match status" value="1"/>
</dbReference>
<dbReference type="Pfam" id="PF07292">
    <property type="entry name" value="NID"/>
    <property type="match status" value="2"/>
</dbReference>
<sequence>MSVTLQTVLYSLQEEQARLKMRLQELQQLKRERTGSPGAKIPFSVPEVPLVFQGQTKQGRQVPKFVVSNLKVCCPLPEGSALVTFEDPKVVDRLLQQKEHRVNLEDCRLRVQVQPLELPVVTNIQVSSQPDNHRVLVSGFPAGLRLSEEELLDKLEIFFGKAKNGGGDVETREMLQGTVMLGFADEEVAQHLCQIGQFRVPLDRQQVLLRVSPYVSGEIQKAEIKFQQAPHSVLVTNIPDVMDAQELHDILEIHFQKPTRGGGEVEALTVVPSGQQGLAIFTSESS</sequence>
<gene>
    <name evidence="8" type="primary">Ifi35</name>
    <name evidence="5" type="synonym">Ifp35</name>
</gene>
<accession>Q9D8C4</accession>
<accession>Q3V2E7</accession>
<reference key="1">
    <citation type="journal article" date="2005" name="Science">
        <title>The transcriptional landscape of the mammalian genome.</title>
        <authorList>
            <person name="Carninci P."/>
            <person name="Kasukawa T."/>
            <person name="Katayama S."/>
            <person name="Gough J."/>
            <person name="Frith M.C."/>
            <person name="Maeda N."/>
            <person name="Oyama R."/>
            <person name="Ravasi T."/>
            <person name="Lenhard B."/>
            <person name="Wells C."/>
            <person name="Kodzius R."/>
            <person name="Shimokawa K."/>
            <person name="Bajic V.B."/>
            <person name="Brenner S.E."/>
            <person name="Batalov S."/>
            <person name="Forrest A.R."/>
            <person name="Zavolan M."/>
            <person name="Davis M.J."/>
            <person name="Wilming L.G."/>
            <person name="Aidinis V."/>
            <person name="Allen J.E."/>
            <person name="Ambesi-Impiombato A."/>
            <person name="Apweiler R."/>
            <person name="Aturaliya R.N."/>
            <person name="Bailey T.L."/>
            <person name="Bansal M."/>
            <person name="Baxter L."/>
            <person name="Beisel K.W."/>
            <person name="Bersano T."/>
            <person name="Bono H."/>
            <person name="Chalk A.M."/>
            <person name="Chiu K.P."/>
            <person name="Choudhary V."/>
            <person name="Christoffels A."/>
            <person name="Clutterbuck D.R."/>
            <person name="Crowe M.L."/>
            <person name="Dalla E."/>
            <person name="Dalrymple B.P."/>
            <person name="de Bono B."/>
            <person name="Della Gatta G."/>
            <person name="di Bernardo D."/>
            <person name="Down T."/>
            <person name="Engstrom P."/>
            <person name="Fagiolini M."/>
            <person name="Faulkner G."/>
            <person name="Fletcher C.F."/>
            <person name="Fukushima T."/>
            <person name="Furuno M."/>
            <person name="Futaki S."/>
            <person name="Gariboldi M."/>
            <person name="Georgii-Hemming P."/>
            <person name="Gingeras T.R."/>
            <person name="Gojobori T."/>
            <person name="Green R.E."/>
            <person name="Gustincich S."/>
            <person name="Harbers M."/>
            <person name="Hayashi Y."/>
            <person name="Hensch T.K."/>
            <person name="Hirokawa N."/>
            <person name="Hill D."/>
            <person name="Huminiecki L."/>
            <person name="Iacono M."/>
            <person name="Ikeo K."/>
            <person name="Iwama A."/>
            <person name="Ishikawa T."/>
            <person name="Jakt M."/>
            <person name="Kanapin A."/>
            <person name="Katoh M."/>
            <person name="Kawasawa Y."/>
            <person name="Kelso J."/>
            <person name="Kitamura H."/>
            <person name="Kitano H."/>
            <person name="Kollias G."/>
            <person name="Krishnan S.P."/>
            <person name="Kruger A."/>
            <person name="Kummerfeld S.K."/>
            <person name="Kurochkin I.V."/>
            <person name="Lareau L.F."/>
            <person name="Lazarevic D."/>
            <person name="Lipovich L."/>
            <person name="Liu J."/>
            <person name="Liuni S."/>
            <person name="McWilliam S."/>
            <person name="Madan Babu M."/>
            <person name="Madera M."/>
            <person name="Marchionni L."/>
            <person name="Matsuda H."/>
            <person name="Matsuzawa S."/>
            <person name="Miki H."/>
            <person name="Mignone F."/>
            <person name="Miyake S."/>
            <person name="Morris K."/>
            <person name="Mottagui-Tabar S."/>
            <person name="Mulder N."/>
            <person name="Nakano N."/>
            <person name="Nakauchi H."/>
            <person name="Ng P."/>
            <person name="Nilsson R."/>
            <person name="Nishiguchi S."/>
            <person name="Nishikawa S."/>
            <person name="Nori F."/>
            <person name="Ohara O."/>
            <person name="Okazaki Y."/>
            <person name="Orlando V."/>
            <person name="Pang K.C."/>
            <person name="Pavan W.J."/>
            <person name="Pavesi G."/>
            <person name="Pesole G."/>
            <person name="Petrovsky N."/>
            <person name="Piazza S."/>
            <person name="Reed J."/>
            <person name="Reid J.F."/>
            <person name="Ring B.Z."/>
            <person name="Ringwald M."/>
            <person name="Rost B."/>
            <person name="Ruan Y."/>
            <person name="Salzberg S.L."/>
            <person name="Sandelin A."/>
            <person name="Schneider C."/>
            <person name="Schoenbach C."/>
            <person name="Sekiguchi K."/>
            <person name="Semple C.A."/>
            <person name="Seno S."/>
            <person name="Sessa L."/>
            <person name="Sheng Y."/>
            <person name="Shibata Y."/>
            <person name="Shimada H."/>
            <person name="Shimada K."/>
            <person name="Silva D."/>
            <person name="Sinclair B."/>
            <person name="Sperling S."/>
            <person name="Stupka E."/>
            <person name="Sugiura K."/>
            <person name="Sultana R."/>
            <person name="Takenaka Y."/>
            <person name="Taki K."/>
            <person name="Tammoja K."/>
            <person name="Tan S.L."/>
            <person name="Tang S."/>
            <person name="Taylor M.S."/>
            <person name="Tegner J."/>
            <person name="Teichmann S.A."/>
            <person name="Ueda H.R."/>
            <person name="van Nimwegen E."/>
            <person name="Verardo R."/>
            <person name="Wei C.L."/>
            <person name="Yagi K."/>
            <person name="Yamanishi H."/>
            <person name="Zabarovsky E."/>
            <person name="Zhu S."/>
            <person name="Zimmer A."/>
            <person name="Hide W."/>
            <person name="Bult C."/>
            <person name="Grimmond S.M."/>
            <person name="Teasdale R.D."/>
            <person name="Liu E.T."/>
            <person name="Brusic V."/>
            <person name="Quackenbush J."/>
            <person name="Wahlestedt C."/>
            <person name="Mattick J.S."/>
            <person name="Hume D.A."/>
            <person name="Kai C."/>
            <person name="Sasaki D."/>
            <person name="Tomaru Y."/>
            <person name="Fukuda S."/>
            <person name="Kanamori-Katayama M."/>
            <person name="Suzuki M."/>
            <person name="Aoki J."/>
            <person name="Arakawa T."/>
            <person name="Iida J."/>
            <person name="Imamura K."/>
            <person name="Itoh M."/>
            <person name="Kato T."/>
            <person name="Kawaji H."/>
            <person name="Kawagashira N."/>
            <person name="Kawashima T."/>
            <person name="Kojima M."/>
            <person name="Kondo S."/>
            <person name="Konno H."/>
            <person name="Nakano K."/>
            <person name="Ninomiya N."/>
            <person name="Nishio T."/>
            <person name="Okada M."/>
            <person name="Plessy C."/>
            <person name="Shibata K."/>
            <person name="Shiraki T."/>
            <person name="Suzuki S."/>
            <person name="Tagami M."/>
            <person name="Waki K."/>
            <person name="Watahiki A."/>
            <person name="Okamura-Oho Y."/>
            <person name="Suzuki H."/>
            <person name="Kawai J."/>
            <person name="Hayashizaki Y."/>
        </authorList>
    </citation>
    <scope>NUCLEOTIDE SEQUENCE [LARGE SCALE MRNA]</scope>
    <source>
        <strain>C57BL/6J</strain>
        <tissue>Small intestine</tissue>
        <tissue>Stomach</tissue>
    </source>
</reference>
<reference key="2">
    <citation type="journal article" date="2004" name="Genome Res.">
        <title>The status, quality, and expansion of the NIH full-length cDNA project: the Mammalian Gene Collection (MGC).</title>
        <authorList>
            <consortium name="The MGC Project Team"/>
        </authorList>
    </citation>
    <scope>NUCLEOTIDE SEQUENCE [LARGE SCALE MRNA]</scope>
    <source>
        <tissue>Mammary tumor</tissue>
    </source>
</reference>
<reference key="3">
    <citation type="journal article" date="2010" name="Cell">
        <title>A tissue-specific atlas of mouse protein phosphorylation and expression.</title>
        <authorList>
            <person name="Huttlin E.L."/>
            <person name="Jedrychowski M.P."/>
            <person name="Elias J.E."/>
            <person name="Goswami T."/>
            <person name="Rad R."/>
            <person name="Beausoleil S.A."/>
            <person name="Villen J."/>
            <person name="Haas W."/>
            <person name="Sowa M.E."/>
            <person name="Gygi S.P."/>
        </authorList>
    </citation>
    <scope>IDENTIFICATION BY MASS SPECTROMETRY [LARGE SCALE ANALYSIS]</scope>
    <source>
        <tissue>Brown adipose tissue</tissue>
        <tissue>Heart</tissue>
        <tissue>Kidney</tissue>
        <tissue>Liver</tissue>
        <tissue>Lung</tissue>
        <tissue>Pancreas</tissue>
        <tissue>Spleen</tissue>
        <tissue>Testis</tissue>
    </source>
</reference>
<reference key="4">
    <citation type="journal article" date="2017" name="Nat. Commun.">
        <title>NMI and IFP35 serve as proinflammatory DAMPs during cellular infection and injury.</title>
        <authorList>
            <person name="Xiahou Z."/>
            <person name="Wang X."/>
            <person name="Shen J."/>
            <person name="Zhu X."/>
            <person name="Xu F."/>
            <person name="Hu R."/>
            <person name="Guo D."/>
            <person name="Li H."/>
            <person name="Tian Y."/>
            <person name="Liu Y."/>
            <person name="Liang H."/>
        </authorList>
    </citation>
    <scope>DISRUPTION PHENOTYPE</scope>
</reference>
<reference key="5">
    <citation type="journal article" date="2018" name="Acta Physiol.">
        <title>Interferon-induced protein 35 inhibits endothelial cell proliferation, migration and re-endothelialization of injured arteries by inhibiting the nuclear factor-kappa B pathway.</title>
        <authorList>
            <person name="Jian D."/>
            <person name="Wang W."/>
            <person name="Zhou X."/>
            <person name="Jia Z."/>
            <person name="Wang J."/>
            <person name="Yang M."/>
            <person name="Zhao W."/>
            <person name="Jiang Z."/>
            <person name="Hu X."/>
            <person name="Zhu J."/>
        </authorList>
    </citation>
    <scope>FUNCTION</scope>
</reference>
<evidence type="ECO:0000250" key="1">
    <source>
        <dbReference type="UniProtKB" id="P80217"/>
    </source>
</evidence>
<evidence type="ECO:0000255" key="2"/>
<evidence type="ECO:0000269" key="3">
    <source>
    </source>
</evidence>
<evidence type="ECO:0000269" key="4">
    <source>
    </source>
</evidence>
<evidence type="ECO:0000303" key="5">
    <source>
    </source>
</evidence>
<evidence type="ECO:0000303" key="6">
    <source>
    </source>
</evidence>
<evidence type="ECO:0000305" key="7"/>
<evidence type="ECO:0000312" key="8">
    <source>
        <dbReference type="MGI" id="MGI:1917360"/>
    </source>
</evidence>
<name>IN35_MOUSE</name>